<evidence type="ECO:0000255" key="1">
    <source>
        <dbReference type="HAMAP-Rule" id="MF_01959"/>
    </source>
</evidence>
<evidence type="ECO:0000256" key="2">
    <source>
        <dbReference type="SAM" id="MobiDB-lite"/>
    </source>
</evidence>
<proteinExistence type="inferred from homology"/>
<sequence>MNIRRKNRLWIACAVLAGLALTIGLVLYALRSNIDLFYTPGEILYGKRETQQMPEVGQRLRVGGMVMPGSVQRDPNSLKVTFTIYDAEGSVDVSYEGILPDLFREGQGVVVQGELEKGNHILAKEVLAKHDENYTPPEVEKAMEANHRRPASVYKDPAS</sequence>
<dbReference type="EMBL" id="CU928145">
    <property type="protein sequence ID" value="CAU98320.1"/>
    <property type="molecule type" value="Genomic_DNA"/>
</dbReference>
<dbReference type="RefSeq" id="WP_001026418.1">
    <property type="nucleotide sequence ID" value="NZ_CP028304.1"/>
</dbReference>
<dbReference type="SMR" id="B7LAM0"/>
<dbReference type="GeneID" id="86860369"/>
<dbReference type="KEGG" id="eck:EC55989_2450"/>
<dbReference type="HOGENOM" id="CLU_079503_1_0_6"/>
<dbReference type="Proteomes" id="UP000000746">
    <property type="component" value="Chromosome"/>
</dbReference>
<dbReference type="GO" id="GO:0005886">
    <property type="term" value="C:plasma membrane"/>
    <property type="evidence" value="ECO:0007669"/>
    <property type="project" value="UniProtKB-SubCell"/>
</dbReference>
<dbReference type="GO" id="GO:0020037">
    <property type="term" value="F:heme binding"/>
    <property type="evidence" value="ECO:0007669"/>
    <property type="project" value="InterPro"/>
</dbReference>
<dbReference type="GO" id="GO:0046872">
    <property type="term" value="F:metal ion binding"/>
    <property type="evidence" value="ECO:0007669"/>
    <property type="project" value="UniProtKB-KW"/>
</dbReference>
<dbReference type="GO" id="GO:0017004">
    <property type="term" value="P:cytochrome complex assembly"/>
    <property type="evidence" value="ECO:0007669"/>
    <property type="project" value="UniProtKB-KW"/>
</dbReference>
<dbReference type="FunFam" id="2.40.50.140:FF:000104">
    <property type="entry name" value="Cytochrome c-type biogenesis protein CcmE"/>
    <property type="match status" value="1"/>
</dbReference>
<dbReference type="Gene3D" id="2.40.50.140">
    <property type="entry name" value="Nucleic acid-binding proteins"/>
    <property type="match status" value="1"/>
</dbReference>
<dbReference type="HAMAP" id="MF_01959">
    <property type="entry name" value="CcmE"/>
    <property type="match status" value="1"/>
</dbReference>
<dbReference type="InterPro" id="IPR004329">
    <property type="entry name" value="CcmE"/>
</dbReference>
<dbReference type="InterPro" id="IPR036127">
    <property type="entry name" value="CcmE-like_sf"/>
</dbReference>
<dbReference type="InterPro" id="IPR012340">
    <property type="entry name" value="NA-bd_OB-fold"/>
</dbReference>
<dbReference type="NCBIfam" id="NF009635">
    <property type="entry name" value="PRK13150.1"/>
    <property type="match status" value="1"/>
</dbReference>
<dbReference type="NCBIfam" id="NF009638">
    <property type="entry name" value="PRK13165.1"/>
    <property type="match status" value="1"/>
</dbReference>
<dbReference type="NCBIfam" id="NF009727">
    <property type="entry name" value="PRK13254.1-1"/>
    <property type="match status" value="1"/>
</dbReference>
<dbReference type="NCBIfam" id="NF009729">
    <property type="entry name" value="PRK13254.1-3"/>
    <property type="match status" value="1"/>
</dbReference>
<dbReference type="PANTHER" id="PTHR34128">
    <property type="entry name" value="CYTOCHROME C-TYPE BIOGENESIS PROTEIN CCME HOMOLOG, MITOCHONDRIAL"/>
    <property type="match status" value="1"/>
</dbReference>
<dbReference type="PANTHER" id="PTHR34128:SF2">
    <property type="entry name" value="CYTOCHROME C-TYPE BIOGENESIS PROTEIN CCME HOMOLOG, MITOCHONDRIAL"/>
    <property type="match status" value="1"/>
</dbReference>
<dbReference type="Pfam" id="PF03100">
    <property type="entry name" value="CcmE"/>
    <property type="match status" value="1"/>
</dbReference>
<dbReference type="SUPFAM" id="SSF82093">
    <property type="entry name" value="Heme chaperone CcmE"/>
    <property type="match status" value="1"/>
</dbReference>
<reference key="1">
    <citation type="journal article" date="2009" name="PLoS Genet.">
        <title>Organised genome dynamics in the Escherichia coli species results in highly diverse adaptive paths.</title>
        <authorList>
            <person name="Touchon M."/>
            <person name="Hoede C."/>
            <person name="Tenaillon O."/>
            <person name="Barbe V."/>
            <person name="Baeriswyl S."/>
            <person name="Bidet P."/>
            <person name="Bingen E."/>
            <person name="Bonacorsi S."/>
            <person name="Bouchier C."/>
            <person name="Bouvet O."/>
            <person name="Calteau A."/>
            <person name="Chiapello H."/>
            <person name="Clermont O."/>
            <person name="Cruveiller S."/>
            <person name="Danchin A."/>
            <person name="Diard M."/>
            <person name="Dossat C."/>
            <person name="Karoui M.E."/>
            <person name="Frapy E."/>
            <person name="Garry L."/>
            <person name="Ghigo J.M."/>
            <person name="Gilles A.M."/>
            <person name="Johnson J."/>
            <person name="Le Bouguenec C."/>
            <person name="Lescat M."/>
            <person name="Mangenot S."/>
            <person name="Martinez-Jehanne V."/>
            <person name="Matic I."/>
            <person name="Nassif X."/>
            <person name="Oztas S."/>
            <person name="Petit M.A."/>
            <person name="Pichon C."/>
            <person name="Rouy Z."/>
            <person name="Ruf C.S."/>
            <person name="Schneider D."/>
            <person name="Tourret J."/>
            <person name="Vacherie B."/>
            <person name="Vallenet D."/>
            <person name="Medigue C."/>
            <person name="Rocha E.P.C."/>
            <person name="Denamur E."/>
        </authorList>
    </citation>
    <scope>NUCLEOTIDE SEQUENCE [LARGE SCALE GENOMIC DNA]</scope>
    <source>
        <strain>55989 / EAEC</strain>
    </source>
</reference>
<accession>B7LAM0</accession>
<keyword id="KW-0997">Cell inner membrane</keyword>
<keyword id="KW-1003">Cell membrane</keyword>
<keyword id="KW-0201">Cytochrome c-type biogenesis</keyword>
<keyword id="KW-0349">Heme</keyword>
<keyword id="KW-0408">Iron</keyword>
<keyword id="KW-0472">Membrane</keyword>
<keyword id="KW-0479">Metal-binding</keyword>
<keyword id="KW-1185">Reference proteome</keyword>
<keyword id="KW-0735">Signal-anchor</keyword>
<keyword id="KW-0812">Transmembrane</keyword>
<keyword id="KW-1133">Transmembrane helix</keyword>
<feature type="chain" id="PRO_1000189014" description="Cytochrome c-type biogenesis protein CcmE">
    <location>
        <begin position="1"/>
        <end position="159"/>
    </location>
</feature>
<feature type="topological domain" description="Cytoplasmic" evidence="1">
    <location>
        <begin position="1"/>
        <end position="8"/>
    </location>
</feature>
<feature type="transmembrane region" description="Helical; Signal-anchor for type II membrane protein" evidence="1">
    <location>
        <begin position="9"/>
        <end position="29"/>
    </location>
</feature>
<feature type="topological domain" description="Periplasmic" evidence="1">
    <location>
        <begin position="30"/>
        <end position="159"/>
    </location>
</feature>
<feature type="region of interest" description="Disordered" evidence="2">
    <location>
        <begin position="132"/>
        <end position="159"/>
    </location>
</feature>
<feature type="compositionally biased region" description="Basic and acidic residues" evidence="2">
    <location>
        <begin position="132"/>
        <end position="147"/>
    </location>
</feature>
<feature type="binding site" description="covalent" evidence="1">
    <location>
        <position position="130"/>
    </location>
    <ligand>
        <name>heme</name>
        <dbReference type="ChEBI" id="CHEBI:30413"/>
    </ligand>
</feature>
<feature type="binding site" description="axial binding residue" evidence="1">
    <location>
        <position position="134"/>
    </location>
    <ligand>
        <name>heme</name>
        <dbReference type="ChEBI" id="CHEBI:30413"/>
    </ligand>
    <ligandPart>
        <name>Fe</name>
        <dbReference type="ChEBI" id="CHEBI:18248"/>
    </ligandPart>
</feature>
<comment type="function">
    <text evidence="1">Heme chaperone required for the biogenesis of c-type cytochromes. Transiently binds heme delivered by CcmC and transfers the heme to apo-cytochromes in a process facilitated by CcmF and CcmH.</text>
</comment>
<comment type="subcellular location">
    <subcellularLocation>
        <location evidence="1">Cell inner membrane</location>
        <topology evidence="1">Single-pass type II membrane protein</topology>
        <orientation evidence="1">Periplasmic side</orientation>
    </subcellularLocation>
</comment>
<comment type="similarity">
    <text evidence="1">Belongs to the CcmE/CycJ family.</text>
</comment>
<organism>
    <name type="scientific">Escherichia coli (strain 55989 / EAEC)</name>
    <dbReference type="NCBI Taxonomy" id="585055"/>
    <lineage>
        <taxon>Bacteria</taxon>
        <taxon>Pseudomonadati</taxon>
        <taxon>Pseudomonadota</taxon>
        <taxon>Gammaproteobacteria</taxon>
        <taxon>Enterobacterales</taxon>
        <taxon>Enterobacteriaceae</taxon>
        <taxon>Escherichia</taxon>
    </lineage>
</organism>
<protein>
    <recommendedName>
        <fullName evidence="1">Cytochrome c-type biogenesis protein CcmE</fullName>
    </recommendedName>
    <alternativeName>
        <fullName evidence="1">Cytochrome c maturation protein E</fullName>
    </alternativeName>
    <alternativeName>
        <fullName evidence="1">Heme chaperone CcmE</fullName>
    </alternativeName>
</protein>
<gene>
    <name evidence="1" type="primary">ccmE</name>
    <name evidence="1" type="synonym">cycJ</name>
    <name type="ordered locus">EC55989_2450</name>
</gene>
<name>CCME_ECO55</name>